<accession>Q606C9</accession>
<gene>
    <name evidence="1" type="primary">cysG</name>
    <name type="ordered locus">MCA2089</name>
</gene>
<evidence type="ECO:0000255" key="1">
    <source>
        <dbReference type="HAMAP-Rule" id="MF_01646"/>
    </source>
</evidence>
<keyword id="KW-0169">Cobalamin biosynthesis</keyword>
<keyword id="KW-0456">Lyase</keyword>
<keyword id="KW-0489">Methyltransferase</keyword>
<keyword id="KW-0511">Multifunctional enzyme</keyword>
<keyword id="KW-0520">NAD</keyword>
<keyword id="KW-0560">Oxidoreductase</keyword>
<keyword id="KW-0627">Porphyrin biosynthesis</keyword>
<keyword id="KW-1185">Reference proteome</keyword>
<keyword id="KW-0949">S-adenosyl-L-methionine</keyword>
<keyword id="KW-0808">Transferase</keyword>
<sequence length="474" mass="50893">MDYLPIFLKLRDLPCLIVGGGEVAVRKLGLLLDAGAAVTVIAASAEAVIVELADRGLIRLRTKVFEATDSEGFRLIIAATDDRAVNAAVATAARRHGIPVNVVDCPDLCDFIFPAIIDRSPVLVAVSTGGASPVLARQLRTRIETCIPSRFGTLARLAADLRERVRQAIPEPRARRHFWERTLEGPAAELALQGRAEDAERVLLEAADAAARQERPAWGSVALVGAGPGDPDLLTLRALRLIQEADVIVYDRLVSAEILALARRDARRIYAGKERSRHSIPQDDINALLANLAAEGNRVVRLKGGDPFIFGRGGEEIETLMACGIPFQVVPGITAASGCAAYAGIPLTHRAHAHACVFVAGHLKDGTLQDLDWSQLVQPHQTVVVYMGLQGLPQICAELIRHGAPPSRPAALIQQGTTRDQKVLTATLETLPDKVADAGIKAPTLIIIGEVVGLRKKLAWYRSRQETEGRSGNG</sequence>
<protein>
    <recommendedName>
        <fullName evidence="1">Siroheme synthase</fullName>
    </recommendedName>
    <domain>
        <recommendedName>
            <fullName evidence="1">Uroporphyrinogen-III C-methyltransferase</fullName>
            <shortName evidence="1">Urogen III methylase</shortName>
            <ecNumber evidence="1">2.1.1.107</ecNumber>
        </recommendedName>
        <alternativeName>
            <fullName evidence="1">SUMT</fullName>
        </alternativeName>
        <alternativeName>
            <fullName evidence="1">Uroporphyrinogen III methylase</fullName>
            <shortName evidence="1">UROM</shortName>
        </alternativeName>
    </domain>
    <domain>
        <recommendedName>
            <fullName evidence="1">Precorrin-2 dehydrogenase</fullName>
            <ecNumber evidence="1">1.3.1.76</ecNumber>
        </recommendedName>
    </domain>
    <domain>
        <recommendedName>
            <fullName evidence="1">Sirohydrochlorin ferrochelatase</fullName>
            <ecNumber evidence="1">4.99.1.4</ecNumber>
        </recommendedName>
    </domain>
</protein>
<feature type="chain" id="PRO_0000330522" description="Siroheme synthase">
    <location>
        <begin position="1"/>
        <end position="474"/>
    </location>
</feature>
<feature type="region of interest" description="Precorrin-2 dehydrogenase /sirohydrochlorin ferrochelatase" evidence="1">
    <location>
        <begin position="1"/>
        <end position="203"/>
    </location>
</feature>
<feature type="region of interest" description="Uroporphyrinogen-III C-methyltransferase" evidence="1">
    <location>
        <begin position="219"/>
        <end position="474"/>
    </location>
</feature>
<feature type="active site" description="Proton acceptor" evidence="1">
    <location>
        <position position="251"/>
    </location>
</feature>
<feature type="active site" description="Proton donor" evidence="1">
    <location>
        <position position="273"/>
    </location>
</feature>
<feature type="binding site" evidence="1">
    <location>
        <begin position="22"/>
        <end position="23"/>
    </location>
    <ligand>
        <name>NAD(+)</name>
        <dbReference type="ChEBI" id="CHEBI:57540"/>
    </ligand>
</feature>
<feature type="binding site" evidence="1">
    <location>
        <begin position="43"/>
        <end position="44"/>
    </location>
    <ligand>
        <name>NAD(+)</name>
        <dbReference type="ChEBI" id="CHEBI:57540"/>
    </ligand>
</feature>
<feature type="binding site" evidence="1">
    <location>
        <position position="228"/>
    </location>
    <ligand>
        <name>S-adenosyl-L-methionine</name>
        <dbReference type="ChEBI" id="CHEBI:59789"/>
    </ligand>
</feature>
<feature type="binding site" evidence="1">
    <location>
        <begin position="304"/>
        <end position="306"/>
    </location>
    <ligand>
        <name>S-adenosyl-L-methionine</name>
        <dbReference type="ChEBI" id="CHEBI:59789"/>
    </ligand>
</feature>
<feature type="binding site" evidence="1">
    <location>
        <position position="309"/>
    </location>
    <ligand>
        <name>S-adenosyl-L-methionine</name>
        <dbReference type="ChEBI" id="CHEBI:59789"/>
    </ligand>
</feature>
<feature type="binding site" evidence="1">
    <location>
        <begin position="334"/>
        <end position="335"/>
    </location>
    <ligand>
        <name>S-adenosyl-L-methionine</name>
        <dbReference type="ChEBI" id="CHEBI:59789"/>
    </ligand>
</feature>
<feature type="binding site" evidence="1">
    <location>
        <position position="387"/>
    </location>
    <ligand>
        <name>S-adenosyl-L-methionine</name>
        <dbReference type="ChEBI" id="CHEBI:59789"/>
    </ligand>
</feature>
<feature type="binding site" evidence="1">
    <location>
        <position position="416"/>
    </location>
    <ligand>
        <name>S-adenosyl-L-methionine</name>
        <dbReference type="ChEBI" id="CHEBI:59789"/>
    </ligand>
</feature>
<dbReference type="EC" id="2.1.1.107" evidence="1"/>
<dbReference type="EC" id="1.3.1.76" evidence="1"/>
<dbReference type="EC" id="4.99.1.4" evidence="1"/>
<dbReference type="EMBL" id="AE017282">
    <property type="protein sequence ID" value="AAU91919.1"/>
    <property type="molecule type" value="Genomic_DNA"/>
</dbReference>
<dbReference type="RefSeq" id="WP_010961332.1">
    <property type="nucleotide sequence ID" value="NC_002977.6"/>
</dbReference>
<dbReference type="SMR" id="Q606C9"/>
<dbReference type="STRING" id="243233.MCA2089"/>
<dbReference type="GeneID" id="88224313"/>
<dbReference type="KEGG" id="mca:MCA2089"/>
<dbReference type="eggNOG" id="COG0007">
    <property type="taxonomic scope" value="Bacteria"/>
</dbReference>
<dbReference type="eggNOG" id="COG1648">
    <property type="taxonomic scope" value="Bacteria"/>
</dbReference>
<dbReference type="HOGENOM" id="CLU_011276_2_2_6"/>
<dbReference type="UniPathway" id="UPA00148">
    <property type="reaction ID" value="UER00211"/>
</dbReference>
<dbReference type="UniPathway" id="UPA00148">
    <property type="reaction ID" value="UER00222"/>
</dbReference>
<dbReference type="UniPathway" id="UPA00262">
    <property type="reaction ID" value="UER00211"/>
</dbReference>
<dbReference type="UniPathway" id="UPA00262">
    <property type="reaction ID" value="UER00222"/>
</dbReference>
<dbReference type="UniPathway" id="UPA00262">
    <property type="reaction ID" value="UER00376"/>
</dbReference>
<dbReference type="Proteomes" id="UP000006821">
    <property type="component" value="Chromosome"/>
</dbReference>
<dbReference type="GO" id="GO:0051287">
    <property type="term" value="F:NAD binding"/>
    <property type="evidence" value="ECO:0007669"/>
    <property type="project" value="InterPro"/>
</dbReference>
<dbReference type="GO" id="GO:0043115">
    <property type="term" value="F:precorrin-2 dehydrogenase activity"/>
    <property type="evidence" value="ECO:0007669"/>
    <property type="project" value="UniProtKB-UniRule"/>
</dbReference>
<dbReference type="GO" id="GO:0051266">
    <property type="term" value="F:sirohydrochlorin ferrochelatase activity"/>
    <property type="evidence" value="ECO:0007669"/>
    <property type="project" value="UniProtKB-EC"/>
</dbReference>
<dbReference type="GO" id="GO:0004851">
    <property type="term" value="F:uroporphyrin-III C-methyltransferase activity"/>
    <property type="evidence" value="ECO:0007669"/>
    <property type="project" value="UniProtKB-UniRule"/>
</dbReference>
<dbReference type="GO" id="GO:0009236">
    <property type="term" value="P:cobalamin biosynthetic process"/>
    <property type="evidence" value="ECO:0007669"/>
    <property type="project" value="UniProtKB-UniRule"/>
</dbReference>
<dbReference type="GO" id="GO:0032259">
    <property type="term" value="P:methylation"/>
    <property type="evidence" value="ECO:0007669"/>
    <property type="project" value="UniProtKB-KW"/>
</dbReference>
<dbReference type="GO" id="GO:0019354">
    <property type="term" value="P:siroheme biosynthetic process"/>
    <property type="evidence" value="ECO:0007669"/>
    <property type="project" value="UniProtKB-UniRule"/>
</dbReference>
<dbReference type="CDD" id="cd11642">
    <property type="entry name" value="SUMT"/>
    <property type="match status" value="1"/>
</dbReference>
<dbReference type="FunFam" id="3.30.160.110:FF:000001">
    <property type="entry name" value="Siroheme synthase"/>
    <property type="match status" value="1"/>
</dbReference>
<dbReference type="FunFam" id="3.30.950.10:FF:000001">
    <property type="entry name" value="Siroheme synthase"/>
    <property type="match status" value="1"/>
</dbReference>
<dbReference type="FunFam" id="3.40.1010.10:FF:000001">
    <property type="entry name" value="Siroheme synthase"/>
    <property type="match status" value="1"/>
</dbReference>
<dbReference type="Gene3D" id="3.40.1010.10">
    <property type="entry name" value="Cobalt-precorrin-4 Transmethylase, Domain 1"/>
    <property type="match status" value="1"/>
</dbReference>
<dbReference type="Gene3D" id="3.30.950.10">
    <property type="entry name" value="Methyltransferase, Cobalt-precorrin-4 Transmethylase, Domain 2"/>
    <property type="match status" value="1"/>
</dbReference>
<dbReference type="Gene3D" id="3.40.50.720">
    <property type="entry name" value="NAD(P)-binding Rossmann-like Domain"/>
    <property type="match status" value="1"/>
</dbReference>
<dbReference type="Gene3D" id="1.10.8.210">
    <property type="entry name" value="Sirohaem synthase, dimerisation domain"/>
    <property type="match status" value="1"/>
</dbReference>
<dbReference type="Gene3D" id="3.30.160.110">
    <property type="entry name" value="Siroheme synthase, domain 2"/>
    <property type="match status" value="1"/>
</dbReference>
<dbReference type="HAMAP" id="MF_01646">
    <property type="entry name" value="Siroheme_synth"/>
    <property type="match status" value="1"/>
</dbReference>
<dbReference type="InterPro" id="IPR000878">
    <property type="entry name" value="4pyrrol_Mease"/>
</dbReference>
<dbReference type="InterPro" id="IPR035996">
    <property type="entry name" value="4pyrrol_Methylase_sf"/>
</dbReference>
<dbReference type="InterPro" id="IPR014777">
    <property type="entry name" value="4pyrrole_Mease_sub1"/>
</dbReference>
<dbReference type="InterPro" id="IPR014776">
    <property type="entry name" value="4pyrrole_Mease_sub2"/>
</dbReference>
<dbReference type="InterPro" id="IPR006366">
    <property type="entry name" value="CobA/CysG_C"/>
</dbReference>
<dbReference type="InterPro" id="IPR036291">
    <property type="entry name" value="NAD(P)-bd_dom_sf"/>
</dbReference>
<dbReference type="InterPro" id="IPR050161">
    <property type="entry name" value="Siro_Cobalamin_biosynth"/>
</dbReference>
<dbReference type="InterPro" id="IPR037115">
    <property type="entry name" value="Sirohaem_synt_dimer_dom_sf"/>
</dbReference>
<dbReference type="InterPro" id="IPR012409">
    <property type="entry name" value="Sirohaem_synth"/>
</dbReference>
<dbReference type="InterPro" id="IPR028281">
    <property type="entry name" value="Sirohaem_synthase_central"/>
</dbReference>
<dbReference type="InterPro" id="IPR019478">
    <property type="entry name" value="Sirohaem_synthase_dimer_dom"/>
</dbReference>
<dbReference type="InterPro" id="IPR006367">
    <property type="entry name" value="Sirohaem_synthase_N"/>
</dbReference>
<dbReference type="InterPro" id="IPR003043">
    <property type="entry name" value="Uropor_MeTrfase_CS"/>
</dbReference>
<dbReference type="NCBIfam" id="TIGR01469">
    <property type="entry name" value="cobA_cysG_Cterm"/>
    <property type="match status" value="1"/>
</dbReference>
<dbReference type="NCBIfam" id="TIGR01470">
    <property type="entry name" value="cysG_Nterm"/>
    <property type="match status" value="1"/>
</dbReference>
<dbReference type="NCBIfam" id="NF004790">
    <property type="entry name" value="PRK06136.1"/>
    <property type="match status" value="1"/>
</dbReference>
<dbReference type="NCBIfam" id="NF007922">
    <property type="entry name" value="PRK10637.1"/>
    <property type="match status" value="1"/>
</dbReference>
<dbReference type="PANTHER" id="PTHR45790:SF1">
    <property type="entry name" value="SIROHEME SYNTHASE"/>
    <property type="match status" value="1"/>
</dbReference>
<dbReference type="PANTHER" id="PTHR45790">
    <property type="entry name" value="SIROHEME SYNTHASE-RELATED"/>
    <property type="match status" value="1"/>
</dbReference>
<dbReference type="Pfam" id="PF10414">
    <property type="entry name" value="CysG_dimeriser"/>
    <property type="match status" value="1"/>
</dbReference>
<dbReference type="Pfam" id="PF13241">
    <property type="entry name" value="NAD_binding_7"/>
    <property type="match status" value="1"/>
</dbReference>
<dbReference type="Pfam" id="PF14824">
    <property type="entry name" value="Sirohm_synth_M"/>
    <property type="match status" value="1"/>
</dbReference>
<dbReference type="Pfam" id="PF00590">
    <property type="entry name" value="TP_methylase"/>
    <property type="match status" value="1"/>
</dbReference>
<dbReference type="PIRSF" id="PIRSF036426">
    <property type="entry name" value="Sirohaem_synth"/>
    <property type="match status" value="1"/>
</dbReference>
<dbReference type="SUPFAM" id="SSF51735">
    <property type="entry name" value="NAD(P)-binding Rossmann-fold domains"/>
    <property type="match status" value="1"/>
</dbReference>
<dbReference type="SUPFAM" id="SSF75615">
    <property type="entry name" value="Siroheme synthase middle domains-like"/>
    <property type="match status" value="1"/>
</dbReference>
<dbReference type="SUPFAM" id="SSF53790">
    <property type="entry name" value="Tetrapyrrole methylase"/>
    <property type="match status" value="1"/>
</dbReference>
<dbReference type="PROSITE" id="PS00839">
    <property type="entry name" value="SUMT_1"/>
    <property type="match status" value="1"/>
</dbReference>
<dbReference type="PROSITE" id="PS00840">
    <property type="entry name" value="SUMT_2"/>
    <property type="match status" value="1"/>
</dbReference>
<comment type="function">
    <text evidence="1">Multifunctional enzyme that catalyzes the SAM-dependent methylations of uroporphyrinogen III at position C-2 and C-7 to form precorrin-2 via precorrin-1. Then it catalyzes the NAD-dependent ring dehydrogenation of precorrin-2 to yield sirohydrochlorin. Finally, it catalyzes the ferrochelation of sirohydrochlorin to yield siroheme.</text>
</comment>
<comment type="catalytic activity">
    <reaction evidence="1">
        <text>uroporphyrinogen III + 2 S-adenosyl-L-methionine = precorrin-2 + 2 S-adenosyl-L-homocysteine + H(+)</text>
        <dbReference type="Rhea" id="RHEA:32459"/>
        <dbReference type="ChEBI" id="CHEBI:15378"/>
        <dbReference type="ChEBI" id="CHEBI:57308"/>
        <dbReference type="ChEBI" id="CHEBI:57856"/>
        <dbReference type="ChEBI" id="CHEBI:58827"/>
        <dbReference type="ChEBI" id="CHEBI:59789"/>
        <dbReference type="EC" id="2.1.1.107"/>
    </reaction>
</comment>
<comment type="catalytic activity">
    <reaction evidence="1">
        <text>precorrin-2 + NAD(+) = sirohydrochlorin + NADH + 2 H(+)</text>
        <dbReference type="Rhea" id="RHEA:15613"/>
        <dbReference type="ChEBI" id="CHEBI:15378"/>
        <dbReference type="ChEBI" id="CHEBI:57540"/>
        <dbReference type="ChEBI" id="CHEBI:57945"/>
        <dbReference type="ChEBI" id="CHEBI:58351"/>
        <dbReference type="ChEBI" id="CHEBI:58827"/>
        <dbReference type="EC" id="1.3.1.76"/>
    </reaction>
</comment>
<comment type="catalytic activity">
    <reaction evidence="1">
        <text>siroheme + 2 H(+) = sirohydrochlorin + Fe(2+)</text>
        <dbReference type="Rhea" id="RHEA:24360"/>
        <dbReference type="ChEBI" id="CHEBI:15378"/>
        <dbReference type="ChEBI" id="CHEBI:29033"/>
        <dbReference type="ChEBI" id="CHEBI:58351"/>
        <dbReference type="ChEBI" id="CHEBI:60052"/>
        <dbReference type="EC" id="4.99.1.4"/>
    </reaction>
</comment>
<comment type="pathway">
    <text evidence="1">Cofactor biosynthesis; adenosylcobalamin biosynthesis; precorrin-2 from uroporphyrinogen III: step 1/1.</text>
</comment>
<comment type="pathway">
    <text evidence="1">Cofactor biosynthesis; adenosylcobalamin biosynthesis; sirohydrochlorin from precorrin-2: step 1/1.</text>
</comment>
<comment type="pathway">
    <text evidence="1">Porphyrin-containing compound metabolism; siroheme biosynthesis; precorrin-2 from uroporphyrinogen III: step 1/1.</text>
</comment>
<comment type="pathway">
    <text evidence="1">Porphyrin-containing compound metabolism; siroheme biosynthesis; siroheme from sirohydrochlorin: step 1/1.</text>
</comment>
<comment type="pathway">
    <text evidence="1">Porphyrin-containing compound metabolism; siroheme biosynthesis; sirohydrochlorin from precorrin-2: step 1/1.</text>
</comment>
<comment type="similarity">
    <text evidence="1">In the N-terminal section; belongs to the precorrin-2 dehydrogenase / sirohydrochlorin ferrochelatase family.</text>
</comment>
<comment type="similarity">
    <text evidence="1">In the C-terminal section; belongs to the precorrin methyltransferase family.</text>
</comment>
<organism>
    <name type="scientific">Methylococcus capsulatus (strain ATCC 33009 / NCIMB 11132 / Bath)</name>
    <dbReference type="NCBI Taxonomy" id="243233"/>
    <lineage>
        <taxon>Bacteria</taxon>
        <taxon>Pseudomonadati</taxon>
        <taxon>Pseudomonadota</taxon>
        <taxon>Gammaproteobacteria</taxon>
        <taxon>Methylococcales</taxon>
        <taxon>Methylococcaceae</taxon>
        <taxon>Methylococcus</taxon>
    </lineage>
</organism>
<name>CYSG_METCA</name>
<proteinExistence type="inferred from homology"/>
<reference key="1">
    <citation type="journal article" date="2004" name="PLoS Biol.">
        <title>Genomic insights into methanotrophy: the complete genome sequence of Methylococcus capsulatus (Bath).</title>
        <authorList>
            <person name="Ward N.L."/>
            <person name="Larsen O."/>
            <person name="Sakwa J."/>
            <person name="Bruseth L."/>
            <person name="Khouri H.M."/>
            <person name="Durkin A.S."/>
            <person name="Dimitrov G."/>
            <person name="Jiang L."/>
            <person name="Scanlan D."/>
            <person name="Kang K.H."/>
            <person name="Lewis M.R."/>
            <person name="Nelson K.E."/>
            <person name="Methe B.A."/>
            <person name="Wu M."/>
            <person name="Heidelberg J.F."/>
            <person name="Paulsen I.T."/>
            <person name="Fouts D.E."/>
            <person name="Ravel J."/>
            <person name="Tettelin H."/>
            <person name="Ren Q."/>
            <person name="Read T.D."/>
            <person name="DeBoy R.T."/>
            <person name="Seshadri R."/>
            <person name="Salzberg S.L."/>
            <person name="Jensen H.B."/>
            <person name="Birkeland N.K."/>
            <person name="Nelson W.C."/>
            <person name="Dodson R.J."/>
            <person name="Grindhaug S.H."/>
            <person name="Holt I.E."/>
            <person name="Eidhammer I."/>
            <person name="Jonasen I."/>
            <person name="Vanaken S."/>
            <person name="Utterback T.R."/>
            <person name="Feldblyum T.V."/>
            <person name="Fraser C.M."/>
            <person name="Lillehaug J.R."/>
            <person name="Eisen J.A."/>
        </authorList>
    </citation>
    <scope>NUCLEOTIDE SEQUENCE [LARGE SCALE GENOMIC DNA]</scope>
    <source>
        <strain>ATCC 33009 / NCIMB 11132 / Bath</strain>
    </source>
</reference>